<dbReference type="EC" id="2.4.2.1" evidence="1"/>
<dbReference type="EC" id="2.4.2.2" evidence="1"/>
<dbReference type="EMBL" id="CP000469">
    <property type="protein sequence ID" value="ABK46506.1"/>
    <property type="molecule type" value="Genomic_DNA"/>
</dbReference>
<dbReference type="RefSeq" id="WP_011715502.1">
    <property type="nucleotide sequence ID" value="NC_008577.1"/>
</dbReference>
<dbReference type="SMR" id="A0KRT7"/>
<dbReference type="STRING" id="94122.Shewana3_0263"/>
<dbReference type="KEGG" id="shn:Shewana3_0263"/>
<dbReference type="eggNOG" id="COG3123">
    <property type="taxonomic scope" value="Bacteria"/>
</dbReference>
<dbReference type="HOGENOM" id="CLU_157874_1_0_6"/>
<dbReference type="OrthoDB" id="9793848at2"/>
<dbReference type="Proteomes" id="UP000002589">
    <property type="component" value="Chromosome"/>
</dbReference>
<dbReference type="GO" id="GO:0005829">
    <property type="term" value="C:cytosol"/>
    <property type="evidence" value="ECO:0007669"/>
    <property type="project" value="TreeGrafter"/>
</dbReference>
<dbReference type="GO" id="GO:0047975">
    <property type="term" value="F:guanosine phosphorylase activity"/>
    <property type="evidence" value="ECO:0007669"/>
    <property type="project" value="UniProtKB-EC"/>
</dbReference>
<dbReference type="GO" id="GO:0004731">
    <property type="term" value="F:purine-nucleoside phosphorylase activity"/>
    <property type="evidence" value="ECO:0007669"/>
    <property type="project" value="UniProtKB-UniRule"/>
</dbReference>
<dbReference type="GO" id="GO:0009032">
    <property type="term" value="F:thymidine phosphorylase activity"/>
    <property type="evidence" value="ECO:0007669"/>
    <property type="project" value="UniProtKB-EC"/>
</dbReference>
<dbReference type="GO" id="GO:0004850">
    <property type="term" value="F:uridine phosphorylase activity"/>
    <property type="evidence" value="ECO:0007669"/>
    <property type="project" value="UniProtKB-EC"/>
</dbReference>
<dbReference type="CDD" id="cd20296">
    <property type="entry name" value="cupin_PpnP-like"/>
    <property type="match status" value="1"/>
</dbReference>
<dbReference type="FunFam" id="2.60.120.10:FF:000016">
    <property type="entry name" value="Pyrimidine/purine nucleoside phosphorylase"/>
    <property type="match status" value="1"/>
</dbReference>
<dbReference type="Gene3D" id="2.60.120.10">
    <property type="entry name" value="Jelly Rolls"/>
    <property type="match status" value="1"/>
</dbReference>
<dbReference type="HAMAP" id="MF_01537">
    <property type="entry name" value="Nucleos_phosphorylase_PpnP"/>
    <property type="match status" value="1"/>
</dbReference>
<dbReference type="InterPro" id="IPR009664">
    <property type="entry name" value="Ppnp"/>
</dbReference>
<dbReference type="InterPro" id="IPR014710">
    <property type="entry name" value="RmlC-like_jellyroll"/>
</dbReference>
<dbReference type="InterPro" id="IPR011051">
    <property type="entry name" value="RmlC_Cupin_sf"/>
</dbReference>
<dbReference type="PANTHER" id="PTHR36540">
    <property type="entry name" value="PYRIMIDINE/PURINE NUCLEOSIDE PHOSPHORYLASE"/>
    <property type="match status" value="1"/>
</dbReference>
<dbReference type="PANTHER" id="PTHR36540:SF1">
    <property type="entry name" value="PYRIMIDINE_PURINE NUCLEOSIDE PHOSPHORYLASE"/>
    <property type="match status" value="1"/>
</dbReference>
<dbReference type="Pfam" id="PF06865">
    <property type="entry name" value="Ppnp"/>
    <property type="match status" value="1"/>
</dbReference>
<dbReference type="SUPFAM" id="SSF51182">
    <property type="entry name" value="RmlC-like cupins"/>
    <property type="match status" value="1"/>
</dbReference>
<feature type="chain" id="PRO_0000298725" description="Pyrimidine/purine nucleoside phosphorylase">
    <location>
        <begin position="1"/>
        <end position="103"/>
    </location>
</feature>
<sequence length="103" mass="11369">MELIEQVSVAKKANIYFEGKVASRSVFFSDGSKKTLGVVLPGEYEFSTSQGEIMQVTSGSFEVLLPNSTTWQTFSEGSQFELAANVSFKIRNNAIAEYCCSYL</sequence>
<comment type="function">
    <text evidence="1">Catalyzes the phosphorolysis of diverse nucleosides, yielding D-ribose 1-phosphate and the respective free bases. Can use uridine, adenosine, guanosine, cytidine, thymidine, inosine and xanthosine as substrates. Also catalyzes the reverse reactions.</text>
</comment>
<comment type="catalytic activity">
    <reaction evidence="1">
        <text>a purine D-ribonucleoside + phosphate = a purine nucleobase + alpha-D-ribose 1-phosphate</text>
        <dbReference type="Rhea" id="RHEA:19805"/>
        <dbReference type="ChEBI" id="CHEBI:26386"/>
        <dbReference type="ChEBI" id="CHEBI:43474"/>
        <dbReference type="ChEBI" id="CHEBI:57720"/>
        <dbReference type="ChEBI" id="CHEBI:142355"/>
        <dbReference type="EC" id="2.4.2.1"/>
    </reaction>
</comment>
<comment type="catalytic activity">
    <reaction evidence="1">
        <text>adenosine + phosphate = alpha-D-ribose 1-phosphate + adenine</text>
        <dbReference type="Rhea" id="RHEA:27642"/>
        <dbReference type="ChEBI" id="CHEBI:16335"/>
        <dbReference type="ChEBI" id="CHEBI:16708"/>
        <dbReference type="ChEBI" id="CHEBI:43474"/>
        <dbReference type="ChEBI" id="CHEBI:57720"/>
        <dbReference type="EC" id="2.4.2.1"/>
    </reaction>
</comment>
<comment type="catalytic activity">
    <reaction evidence="1">
        <text>cytidine + phosphate = cytosine + alpha-D-ribose 1-phosphate</text>
        <dbReference type="Rhea" id="RHEA:52540"/>
        <dbReference type="ChEBI" id="CHEBI:16040"/>
        <dbReference type="ChEBI" id="CHEBI:17562"/>
        <dbReference type="ChEBI" id="CHEBI:43474"/>
        <dbReference type="ChEBI" id="CHEBI:57720"/>
        <dbReference type="EC" id="2.4.2.2"/>
    </reaction>
</comment>
<comment type="catalytic activity">
    <reaction evidence="1">
        <text>guanosine + phosphate = alpha-D-ribose 1-phosphate + guanine</text>
        <dbReference type="Rhea" id="RHEA:13233"/>
        <dbReference type="ChEBI" id="CHEBI:16235"/>
        <dbReference type="ChEBI" id="CHEBI:16750"/>
        <dbReference type="ChEBI" id="CHEBI:43474"/>
        <dbReference type="ChEBI" id="CHEBI:57720"/>
        <dbReference type="EC" id="2.4.2.1"/>
    </reaction>
</comment>
<comment type="catalytic activity">
    <reaction evidence="1">
        <text>inosine + phosphate = alpha-D-ribose 1-phosphate + hypoxanthine</text>
        <dbReference type="Rhea" id="RHEA:27646"/>
        <dbReference type="ChEBI" id="CHEBI:17368"/>
        <dbReference type="ChEBI" id="CHEBI:17596"/>
        <dbReference type="ChEBI" id="CHEBI:43474"/>
        <dbReference type="ChEBI" id="CHEBI:57720"/>
        <dbReference type="EC" id="2.4.2.1"/>
    </reaction>
</comment>
<comment type="catalytic activity">
    <reaction evidence="1">
        <text>thymidine + phosphate = 2-deoxy-alpha-D-ribose 1-phosphate + thymine</text>
        <dbReference type="Rhea" id="RHEA:16037"/>
        <dbReference type="ChEBI" id="CHEBI:17748"/>
        <dbReference type="ChEBI" id="CHEBI:17821"/>
        <dbReference type="ChEBI" id="CHEBI:43474"/>
        <dbReference type="ChEBI" id="CHEBI:57259"/>
        <dbReference type="EC" id="2.4.2.2"/>
    </reaction>
</comment>
<comment type="catalytic activity">
    <reaction evidence="1">
        <text>uridine + phosphate = alpha-D-ribose 1-phosphate + uracil</text>
        <dbReference type="Rhea" id="RHEA:24388"/>
        <dbReference type="ChEBI" id="CHEBI:16704"/>
        <dbReference type="ChEBI" id="CHEBI:17568"/>
        <dbReference type="ChEBI" id="CHEBI:43474"/>
        <dbReference type="ChEBI" id="CHEBI:57720"/>
        <dbReference type="EC" id="2.4.2.2"/>
    </reaction>
</comment>
<comment type="catalytic activity">
    <reaction evidence="1">
        <text>xanthosine + phosphate = alpha-D-ribose 1-phosphate + xanthine</text>
        <dbReference type="Rhea" id="RHEA:27638"/>
        <dbReference type="ChEBI" id="CHEBI:17712"/>
        <dbReference type="ChEBI" id="CHEBI:18107"/>
        <dbReference type="ChEBI" id="CHEBI:43474"/>
        <dbReference type="ChEBI" id="CHEBI:57720"/>
        <dbReference type="EC" id="2.4.2.1"/>
    </reaction>
</comment>
<comment type="similarity">
    <text evidence="1">Belongs to the nucleoside phosphorylase PpnP family.</text>
</comment>
<protein>
    <recommendedName>
        <fullName evidence="1">Pyrimidine/purine nucleoside phosphorylase</fullName>
        <ecNumber evidence="1">2.4.2.1</ecNumber>
        <ecNumber evidence="1">2.4.2.2</ecNumber>
    </recommendedName>
    <alternativeName>
        <fullName evidence="1">Adenosine phosphorylase</fullName>
    </alternativeName>
    <alternativeName>
        <fullName evidence="1">Cytidine phosphorylase</fullName>
    </alternativeName>
    <alternativeName>
        <fullName evidence="1">Guanosine phosphorylase</fullName>
    </alternativeName>
    <alternativeName>
        <fullName evidence="1">Inosine phosphorylase</fullName>
    </alternativeName>
    <alternativeName>
        <fullName evidence="1">Thymidine phosphorylase</fullName>
    </alternativeName>
    <alternativeName>
        <fullName evidence="1">Uridine phosphorylase</fullName>
    </alternativeName>
    <alternativeName>
        <fullName evidence="1">Xanthosine phosphorylase</fullName>
    </alternativeName>
</protein>
<evidence type="ECO:0000255" key="1">
    <source>
        <dbReference type="HAMAP-Rule" id="MF_01537"/>
    </source>
</evidence>
<accession>A0KRT7</accession>
<keyword id="KW-0328">Glycosyltransferase</keyword>
<keyword id="KW-0808">Transferase</keyword>
<gene>
    <name evidence="1" type="primary">ppnP</name>
    <name type="ordered locus">Shewana3_0263</name>
</gene>
<organism>
    <name type="scientific">Shewanella sp. (strain ANA-3)</name>
    <dbReference type="NCBI Taxonomy" id="94122"/>
    <lineage>
        <taxon>Bacteria</taxon>
        <taxon>Pseudomonadati</taxon>
        <taxon>Pseudomonadota</taxon>
        <taxon>Gammaproteobacteria</taxon>
        <taxon>Alteromonadales</taxon>
        <taxon>Shewanellaceae</taxon>
        <taxon>Shewanella</taxon>
    </lineage>
</organism>
<reference key="1">
    <citation type="submission" date="2006-09" db="EMBL/GenBank/DDBJ databases">
        <title>Complete sequence of chromosome 1 of Shewanella sp. ANA-3.</title>
        <authorList>
            <person name="Copeland A."/>
            <person name="Lucas S."/>
            <person name="Lapidus A."/>
            <person name="Barry K."/>
            <person name="Detter J.C."/>
            <person name="Glavina del Rio T."/>
            <person name="Hammon N."/>
            <person name="Israni S."/>
            <person name="Dalin E."/>
            <person name="Tice H."/>
            <person name="Pitluck S."/>
            <person name="Chertkov O."/>
            <person name="Brettin T."/>
            <person name="Bruce D."/>
            <person name="Han C."/>
            <person name="Tapia R."/>
            <person name="Gilna P."/>
            <person name="Schmutz J."/>
            <person name="Larimer F."/>
            <person name="Land M."/>
            <person name="Hauser L."/>
            <person name="Kyrpides N."/>
            <person name="Kim E."/>
            <person name="Newman D."/>
            <person name="Salticov C."/>
            <person name="Konstantinidis K."/>
            <person name="Klappenback J."/>
            <person name="Tiedje J."/>
            <person name="Richardson P."/>
        </authorList>
    </citation>
    <scope>NUCLEOTIDE SEQUENCE [LARGE SCALE GENOMIC DNA]</scope>
    <source>
        <strain>ANA-3</strain>
    </source>
</reference>
<proteinExistence type="inferred from homology"/>
<name>PPNP_SHESA</name>